<reference key="1">
    <citation type="journal article" date="1999" name="J. Biol. Chem.">
        <title>The mouse gene PDCR encodes a peroxisomal delta(2), delta(4)-dienoyl-CoA reductase.</title>
        <authorList>
            <person name="Geisbrecht B.V."/>
            <person name="Liang X."/>
            <person name="Morrell J.C."/>
            <person name="Schulz H."/>
            <person name="Gould S.J."/>
        </authorList>
    </citation>
    <scope>NUCLEOTIDE SEQUENCE [MRNA]</scope>
    <scope>SUBCELLULAR LOCATION</scope>
    <scope>BIOPHYSICOCHEMICAL PROPERTIES</scope>
    <scope>CATALYTIC ACTIVITY</scope>
    <scope>FUNCTION</scope>
</reference>
<reference key="2">
    <citation type="journal article" date="2004" name="Genome Res.">
        <title>The status, quality, and expansion of the NIH full-length cDNA project: the Mammalian Gene Collection (MGC).</title>
        <authorList>
            <consortium name="The MGC Project Team"/>
        </authorList>
    </citation>
    <scope>NUCLEOTIDE SEQUENCE [LARGE SCALE MRNA]</scope>
    <source>
        <strain>FVB/N</strain>
        <tissue>Liver</tissue>
    </source>
</reference>
<reference key="3">
    <citation type="journal article" date="2010" name="Cell">
        <title>A tissue-specific atlas of mouse protein phosphorylation and expression.</title>
        <authorList>
            <person name="Huttlin E.L."/>
            <person name="Jedrychowski M.P."/>
            <person name="Elias J.E."/>
            <person name="Goswami T."/>
            <person name="Rad R."/>
            <person name="Beausoleil S.A."/>
            <person name="Villen J."/>
            <person name="Haas W."/>
            <person name="Sowa M.E."/>
            <person name="Gygi S.P."/>
        </authorList>
    </citation>
    <scope>IDENTIFICATION BY MASS SPECTROMETRY [LARGE SCALE ANALYSIS]</scope>
    <source>
        <tissue>Kidney</tissue>
        <tissue>Liver</tissue>
    </source>
</reference>
<reference key="4">
    <citation type="journal article" date="2013" name="Proc. Natl. Acad. Sci. U.S.A.">
        <title>Label-free quantitative proteomics of the lysine acetylome in mitochondria identifies substrates of SIRT3 in metabolic pathways.</title>
        <authorList>
            <person name="Rardin M.J."/>
            <person name="Newman J.C."/>
            <person name="Held J.M."/>
            <person name="Cusack M.P."/>
            <person name="Sorensen D.J."/>
            <person name="Li B."/>
            <person name="Schilling B."/>
            <person name="Mooney S.D."/>
            <person name="Kahn C.R."/>
            <person name="Verdin E."/>
            <person name="Gibson B.W."/>
        </authorList>
    </citation>
    <scope>ACETYLATION [LARGE SCALE ANALYSIS] AT LYS-64</scope>
    <scope>IDENTIFICATION BY MASS SPECTROMETRY [LARGE SCALE ANALYSIS]</scope>
    <source>
        <tissue>Liver</tissue>
    </source>
</reference>
<proteinExistence type="evidence at protein level"/>
<evidence type="ECO:0000250" key="1"/>
<evidence type="ECO:0000250" key="2">
    <source>
        <dbReference type="UniProtKB" id="Q9NUI1"/>
    </source>
</evidence>
<evidence type="ECO:0000269" key="3">
    <source>
    </source>
</evidence>
<evidence type="ECO:0000305" key="4"/>
<evidence type="ECO:0007744" key="5">
    <source>
    </source>
</evidence>
<feature type="initiator methionine" description="Removed" evidence="2">
    <location>
        <position position="1"/>
    </location>
</feature>
<feature type="chain" id="PRO_0000054560" description="Peroxisomal 2,4-dienoyl-CoA reductase [(3E)-enoyl-CoA-producing]">
    <location>
        <begin position="2"/>
        <end position="292"/>
    </location>
</feature>
<feature type="short sequence motif" description="Microbody targeting signal" evidence="1">
    <location>
        <begin position="290"/>
        <end position="292"/>
    </location>
</feature>
<feature type="binding site" evidence="1">
    <location>
        <begin position="35"/>
        <end position="40"/>
    </location>
    <ligand>
        <name>NADP(+)</name>
        <dbReference type="ChEBI" id="CHEBI:58349"/>
    </ligand>
</feature>
<feature type="binding site" evidence="1">
    <location>
        <begin position="60"/>
        <end position="64"/>
    </location>
    <ligand>
        <name>NADP(+)</name>
        <dbReference type="ChEBI" id="CHEBI:58349"/>
    </ligand>
</feature>
<feature type="binding site" evidence="1">
    <location>
        <position position="60"/>
    </location>
    <ligand>
        <name>substrate</name>
    </ligand>
</feature>
<feature type="binding site" evidence="1">
    <location>
        <position position="86"/>
    </location>
    <ligand>
        <name>NADP(+)</name>
        <dbReference type="ChEBI" id="CHEBI:58349"/>
    </ligand>
</feature>
<feature type="binding site" evidence="1">
    <location>
        <position position="88"/>
    </location>
    <ligand>
        <name>substrate</name>
    </ligand>
</feature>
<feature type="binding site" evidence="1">
    <location>
        <position position="118"/>
    </location>
    <ligand>
        <name>substrate</name>
    </ligand>
</feature>
<feature type="binding site" evidence="1">
    <location>
        <begin position="126"/>
        <end position="128"/>
    </location>
    <ligand>
        <name>substrate</name>
    </ligand>
</feature>
<feature type="binding site" evidence="1">
    <location>
        <position position="182"/>
    </location>
    <ligand>
        <name>NADP(+)</name>
        <dbReference type="ChEBI" id="CHEBI:58349"/>
    </ligand>
</feature>
<feature type="binding site" evidence="1">
    <location>
        <begin position="208"/>
        <end position="214"/>
    </location>
    <ligand>
        <name>NADP(+)</name>
        <dbReference type="ChEBI" id="CHEBI:58349"/>
    </ligand>
</feature>
<feature type="binding site" evidence="1">
    <location>
        <position position="219"/>
    </location>
    <ligand>
        <name>substrate</name>
    </ligand>
</feature>
<feature type="modified residue" description="N-acetylalanine" evidence="2">
    <location>
        <position position="2"/>
    </location>
</feature>
<feature type="modified residue" description="N6-acetyllysine" evidence="5">
    <location>
        <position position="64"/>
    </location>
</feature>
<feature type="modified residue" description="N6-acetyllysine" evidence="2">
    <location>
        <position position="151"/>
    </location>
</feature>
<feature type="modified residue" description="Phosphoserine" evidence="2">
    <location>
        <position position="287"/>
    </location>
</feature>
<feature type="modified residue" description="N6-acetyllysine" evidence="2">
    <location>
        <position position="291"/>
    </location>
</feature>
<comment type="function">
    <text evidence="3">Auxiliary enzyme of beta-oxidation. Participates in the degradation of unsaturated fatty enoyl-CoA esters having double bonds in both even- and odd-numbered positions in peroxisome. Catalyzes the NADP-dependent reduction of 2,4-dienoyl-CoA to yield trans-3-enoyl-CoA. Has activity towards short and medium chain 2,4-dienoyl-CoAs, but also towards 2,4,7,10,13,16,19-docosaheptaenoyl-CoA, suggesting that it does not constitute a rate limiting step in the peroxisomal degradation of docosahexaenoic acid.</text>
</comment>
<comment type="catalytic activity">
    <reaction evidence="3">
        <text>a (2E,4Z)-dienoyl-CoA + NADPH + H(+) = a 4,5-saturated-(3E)-enoyl-CoA + NADP(+)</text>
        <dbReference type="Rhea" id="RHEA:61892"/>
        <dbReference type="ChEBI" id="CHEBI:15378"/>
        <dbReference type="ChEBI" id="CHEBI:57783"/>
        <dbReference type="ChEBI" id="CHEBI:58349"/>
        <dbReference type="ChEBI" id="CHEBI:85099"/>
        <dbReference type="ChEBI" id="CHEBI:85493"/>
        <dbReference type="EC" id="1.3.1.124"/>
    </reaction>
</comment>
<comment type="catalytic activity">
    <reaction evidence="3">
        <text>a (2E,4E)-dienoyl-CoA + NADPH + H(+) = a 4,5-saturated-(3E)-enoyl-CoA + NADP(+)</text>
        <dbReference type="Rhea" id="RHEA:45912"/>
        <dbReference type="ChEBI" id="CHEBI:15378"/>
        <dbReference type="ChEBI" id="CHEBI:57783"/>
        <dbReference type="ChEBI" id="CHEBI:58349"/>
        <dbReference type="ChEBI" id="CHEBI:85101"/>
        <dbReference type="ChEBI" id="CHEBI:85493"/>
        <dbReference type="EC" id="1.3.1.124"/>
    </reaction>
</comment>
<comment type="catalytic activity">
    <reaction evidence="3">
        <text>(2E,4E)-hexadienoyl-CoA + NADPH + H(+) = (3E)-hexenoyl-CoA + NADP(+)</text>
        <dbReference type="Rhea" id="RHEA:44912"/>
        <dbReference type="ChEBI" id="CHEBI:15378"/>
        <dbReference type="ChEBI" id="CHEBI:57783"/>
        <dbReference type="ChEBI" id="CHEBI:58349"/>
        <dbReference type="ChEBI" id="CHEBI:84788"/>
        <dbReference type="ChEBI" id="CHEBI:84790"/>
    </reaction>
</comment>
<comment type="catalytic activity">
    <reaction evidence="3">
        <text>(2E,4E)-decadienoyl-CoA + NADPH + H(+) = (3E)-decenoyl-CoA + NADP(+)</text>
        <dbReference type="Rhea" id="RHEA:44916"/>
        <dbReference type="ChEBI" id="CHEBI:15378"/>
        <dbReference type="ChEBI" id="CHEBI:57783"/>
        <dbReference type="ChEBI" id="CHEBI:58349"/>
        <dbReference type="ChEBI" id="CHEBI:62244"/>
        <dbReference type="ChEBI" id="CHEBI:84793"/>
    </reaction>
</comment>
<comment type="catalytic activity">
    <reaction evidence="3">
        <text>(2E,4Z,7Z,10Z,13Z,16Z,19Z)-docosaheptaenoyl-CoA + NADPH + H(+) = (3E,7Z,10Z,13Z,16Z,19Z)-docosahexaenoyl-CoA + NADP(+)</text>
        <dbReference type="Rhea" id="RHEA:44920"/>
        <dbReference type="ChEBI" id="CHEBI:15378"/>
        <dbReference type="ChEBI" id="CHEBI:57783"/>
        <dbReference type="ChEBI" id="CHEBI:58349"/>
        <dbReference type="ChEBI" id="CHEBI:77559"/>
        <dbReference type="ChEBI" id="CHEBI:84791"/>
    </reaction>
</comment>
<comment type="biophysicochemical properties">
    <kinetics>
        <KM evidence="3">108 uM for 2,4-hexadienoyl-CoA</KM>
        <KM evidence="3">6 uM for 2,4-decadienoyl-CoA</KM>
        <KM evidence="3">155 uM for 2,4,7,10,13,16,19-docosaheptaenoyl-CoA</KM>
        <Vmax evidence="3">8.0 nmol/min/mg enzyme with 2,4-hexadienoyl-CoA as substrate</Vmax>
        <Vmax evidence="3">20.0 nmol/min/mg enzyme with 2,4-decadienoyl-CoA as substrate</Vmax>
        <Vmax evidence="3">5.0 nmol/min/mg enzyme with 2,4,7,10,13,16,19-docosaheptaenoyl-CoA as substrate</Vmax>
    </kinetics>
</comment>
<comment type="subunit">
    <text evidence="2">Monomer, dimer and oligomer.</text>
</comment>
<comment type="subcellular location">
    <subcellularLocation>
        <location evidence="3">Peroxisome</location>
    </subcellularLocation>
</comment>
<comment type="similarity">
    <text evidence="4">Belongs to the short-chain dehydrogenases/reductases (SDR) family. 2,4-dienoyl-CoA reductase subfamily.</text>
</comment>
<accession>Q9WV68</accession>
<gene>
    <name type="primary">Decr2</name>
    <name type="synonym">Pdcr</name>
</gene>
<sequence length="292" mass="31300">MAQPPPDVEGDDCLPEYHHLFCPDLLQDKVAFITGGGSGIGFRIAEIFMRHGCHTVIVGRSLQKVTTAAKKLVAATGKRCLPLSMDVRVPPEVMTAVDQALQEFGKINILINCAAGNFLCPASALSFNAFKTVVDIDTIGTFNVSSVLYKKFFRDHGGVIVNITATLSMRGQVLQLHAGAAKAAVDAMTRHLAVEWGPQNIRVNSLAPGAISGTEGLRRLRGSNASSKLKHFSNPIPRLGTKTEIAHSVLYLASPLASYVSGIVLVVDGGSWMTFPNGIKQLLEFESFSAKL</sequence>
<dbReference type="EC" id="1.3.1.124" evidence="3"/>
<dbReference type="EMBL" id="AF155575">
    <property type="protein sequence ID" value="AAD38196.1"/>
    <property type="molecule type" value="mRNA"/>
</dbReference>
<dbReference type="EMBL" id="BC021865">
    <property type="protein sequence ID" value="AAH21865.1"/>
    <property type="molecule type" value="mRNA"/>
</dbReference>
<dbReference type="CCDS" id="CCDS28543.1"/>
<dbReference type="RefSeq" id="NP_001398239.1">
    <property type="nucleotide sequence ID" value="NM_001411310.1"/>
</dbReference>
<dbReference type="RefSeq" id="NP_001398240.1">
    <property type="nucleotide sequence ID" value="NM_001411311.1"/>
</dbReference>
<dbReference type="RefSeq" id="NP_036063.1">
    <property type="nucleotide sequence ID" value="NM_011933.3"/>
</dbReference>
<dbReference type="SMR" id="Q9WV68"/>
<dbReference type="BioGRID" id="204936">
    <property type="interactions" value="2"/>
</dbReference>
<dbReference type="FunCoup" id="Q9WV68">
    <property type="interactions" value="587"/>
</dbReference>
<dbReference type="STRING" id="10090.ENSMUSP00000045621"/>
<dbReference type="GlyGen" id="Q9WV68">
    <property type="glycosylation" value="2 sites, 1 N-linked glycan (1 site), 1 O-linked glycan (1 site)"/>
</dbReference>
<dbReference type="iPTMnet" id="Q9WV68"/>
<dbReference type="PhosphoSitePlus" id="Q9WV68"/>
<dbReference type="SwissPalm" id="Q9WV68"/>
<dbReference type="jPOST" id="Q9WV68"/>
<dbReference type="PaxDb" id="10090-ENSMUSP00000045621"/>
<dbReference type="ProteomicsDB" id="277975"/>
<dbReference type="Pumba" id="Q9WV68"/>
<dbReference type="Antibodypedia" id="34897">
    <property type="antibodies" value="150 antibodies from 27 providers"/>
</dbReference>
<dbReference type="DNASU" id="26378"/>
<dbReference type="Ensembl" id="ENSMUST00000040907.8">
    <property type="protein sequence ID" value="ENSMUSP00000045621.7"/>
    <property type="gene ID" value="ENSMUSG00000036775.14"/>
</dbReference>
<dbReference type="GeneID" id="26378"/>
<dbReference type="KEGG" id="mmu:26378"/>
<dbReference type="UCSC" id="uc008bdg.1">
    <property type="organism name" value="mouse"/>
</dbReference>
<dbReference type="AGR" id="MGI:1347059"/>
<dbReference type="CTD" id="26063"/>
<dbReference type="MGI" id="MGI:1347059">
    <property type="gene designation" value="Decr2"/>
</dbReference>
<dbReference type="VEuPathDB" id="HostDB:ENSMUSG00000036775"/>
<dbReference type="eggNOG" id="KOG0725">
    <property type="taxonomic scope" value="Eukaryota"/>
</dbReference>
<dbReference type="GeneTree" id="ENSGT00940000153801"/>
<dbReference type="HOGENOM" id="CLU_010194_1_2_1"/>
<dbReference type="InParanoid" id="Q9WV68"/>
<dbReference type="OMA" id="MQAHVCA"/>
<dbReference type="PhylomeDB" id="Q9WV68"/>
<dbReference type="TreeFam" id="TF315256"/>
<dbReference type="BRENDA" id="1.3.1.124">
    <property type="organism ID" value="3474"/>
</dbReference>
<dbReference type="Reactome" id="R-MMU-390247">
    <property type="pathway name" value="Beta-oxidation of very long chain fatty acids"/>
</dbReference>
<dbReference type="Reactome" id="R-MMU-9033241">
    <property type="pathway name" value="Peroxisomal protein import"/>
</dbReference>
<dbReference type="SABIO-RK" id="Q9WV68"/>
<dbReference type="BioGRID-ORCS" id="26378">
    <property type="hits" value="2 hits in 79 CRISPR screens"/>
</dbReference>
<dbReference type="ChiTaRS" id="Decr2">
    <property type="organism name" value="mouse"/>
</dbReference>
<dbReference type="PRO" id="PR:Q9WV68"/>
<dbReference type="Proteomes" id="UP000000589">
    <property type="component" value="Chromosome 17"/>
</dbReference>
<dbReference type="RNAct" id="Q9WV68">
    <property type="molecule type" value="protein"/>
</dbReference>
<dbReference type="Bgee" id="ENSMUSG00000036775">
    <property type="expression patterns" value="Expressed in dorsal pancreas and 235 other cell types or tissues"/>
</dbReference>
<dbReference type="ExpressionAtlas" id="Q9WV68">
    <property type="expression patterns" value="baseline and differential"/>
</dbReference>
<dbReference type="GO" id="GO:0005777">
    <property type="term" value="C:peroxisome"/>
    <property type="evidence" value="ECO:0007669"/>
    <property type="project" value="UniProtKB-SubCell"/>
</dbReference>
<dbReference type="GO" id="GO:0008670">
    <property type="term" value="F:2,4-dienoyl-CoA reductase (NADPH) activity"/>
    <property type="evidence" value="ECO:0000250"/>
    <property type="project" value="UniProtKB"/>
</dbReference>
<dbReference type="GO" id="GO:0051020">
    <property type="term" value="F:GTPase binding"/>
    <property type="evidence" value="ECO:0007669"/>
    <property type="project" value="Ensembl"/>
</dbReference>
<dbReference type="GO" id="GO:0044877">
    <property type="term" value="F:protein-containing complex binding"/>
    <property type="evidence" value="ECO:0007669"/>
    <property type="project" value="Ensembl"/>
</dbReference>
<dbReference type="GO" id="GO:0019166">
    <property type="term" value="F:trans-2-enoyl-CoA reductase (NADPH) activity"/>
    <property type="evidence" value="ECO:0007669"/>
    <property type="project" value="Ensembl"/>
</dbReference>
<dbReference type="GO" id="GO:0009062">
    <property type="term" value="P:fatty acid catabolic process"/>
    <property type="evidence" value="ECO:0007669"/>
    <property type="project" value="InterPro"/>
</dbReference>
<dbReference type="GO" id="GO:0006636">
    <property type="term" value="P:unsaturated fatty acid biosynthetic process"/>
    <property type="evidence" value="ECO:0000250"/>
    <property type="project" value="UniProtKB"/>
</dbReference>
<dbReference type="CDD" id="cd05369">
    <property type="entry name" value="TER_DECR_SDR_a"/>
    <property type="match status" value="1"/>
</dbReference>
<dbReference type="FunFam" id="3.40.50.720:FF:000477">
    <property type="entry name" value="Peroxisomal 2,4-dienoyl-CoA reductase"/>
    <property type="match status" value="1"/>
</dbReference>
<dbReference type="Gene3D" id="3.40.50.720">
    <property type="entry name" value="NAD(P)-binding Rossmann-like Domain"/>
    <property type="match status" value="1"/>
</dbReference>
<dbReference type="InterPro" id="IPR045017">
    <property type="entry name" value="DECR2-like"/>
</dbReference>
<dbReference type="InterPro" id="IPR036291">
    <property type="entry name" value="NAD(P)-bd_dom_sf"/>
</dbReference>
<dbReference type="InterPro" id="IPR002347">
    <property type="entry name" value="SDR_fam"/>
</dbReference>
<dbReference type="PANTHER" id="PTHR43296">
    <property type="entry name" value="PEROXISOMAL 2,4-DIENOYL-COA REDUCTASE"/>
    <property type="match status" value="1"/>
</dbReference>
<dbReference type="PANTHER" id="PTHR43296:SF2">
    <property type="entry name" value="PEROXISOMAL 2,4-DIENOYL-COA REDUCTASE [(3E)-ENOYL-COA-PRODUCING]"/>
    <property type="match status" value="1"/>
</dbReference>
<dbReference type="Pfam" id="PF13561">
    <property type="entry name" value="adh_short_C2"/>
    <property type="match status" value="1"/>
</dbReference>
<dbReference type="PRINTS" id="PR00081">
    <property type="entry name" value="GDHRDH"/>
</dbReference>
<dbReference type="SUPFAM" id="SSF51735">
    <property type="entry name" value="NAD(P)-binding Rossmann-fold domains"/>
    <property type="match status" value="1"/>
</dbReference>
<keyword id="KW-0007">Acetylation</keyword>
<keyword id="KW-0276">Fatty acid metabolism</keyword>
<keyword id="KW-0443">Lipid metabolism</keyword>
<keyword id="KW-0521">NADP</keyword>
<keyword id="KW-0560">Oxidoreductase</keyword>
<keyword id="KW-0576">Peroxisome</keyword>
<keyword id="KW-0597">Phosphoprotein</keyword>
<keyword id="KW-1185">Reference proteome</keyword>
<name>DECR2_MOUSE</name>
<protein>
    <recommendedName>
        <fullName>Peroxisomal 2,4-dienoyl-CoA reductase [(3E)-enoyl-CoA-producing]</fullName>
        <ecNumber evidence="3">1.3.1.124</ecNumber>
    </recommendedName>
    <alternativeName>
        <fullName>2,4-dienoyl-CoA reductase 2</fullName>
    </alternativeName>
</protein>
<organism>
    <name type="scientific">Mus musculus</name>
    <name type="common">Mouse</name>
    <dbReference type="NCBI Taxonomy" id="10090"/>
    <lineage>
        <taxon>Eukaryota</taxon>
        <taxon>Metazoa</taxon>
        <taxon>Chordata</taxon>
        <taxon>Craniata</taxon>
        <taxon>Vertebrata</taxon>
        <taxon>Euteleostomi</taxon>
        <taxon>Mammalia</taxon>
        <taxon>Eutheria</taxon>
        <taxon>Euarchontoglires</taxon>
        <taxon>Glires</taxon>
        <taxon>Rodentia</taxon>
        <taxon>Myomorpha</taxon>
        <taxon>Muroidea</taxon>
        <taxon>Muridae</taxon>
        <taxon>Murinae</taxon>
        <taxon>Mus</taxon>
        <taxon>Mus</taxon>
    </lineage>
</organism>